<comment type="function">
    <text evidence="1">Specifically dimethylates two adjacent adenosines (A1518 and A1519) in the loop of a conserved hairpin near the 3'-end of 16S rRNA in the 30S particle. May play a critical role in biogenesis of 30S subunits.</text>
</comment>
<comment type="catalytic activity">
    <reaction evidence="1">
        <text>adenosine(1518)/adenosine(1519) in 16S rRNA + 4 S-adenosyl-L-methionine = N(6)-dimethyladenosine(1518)/N(6)-dimethyladenosine(1519) in 16S rRNA + 4 S-adenosyl-L-homocysteine + 4 H(+)</text>
        <dbReference type="Rhea" id="RHEA:19609"/>
        <dbReference type="Rhea" id="RHEA-COMP:10232"/>
        <dbReference type="Rhea" id="RHEA-COMP:10233"/>
        <dbReference type="ChEBI" id="CHEBI:15378"/>
        <dbReference type="ChEBI" id="CHEBI:57856"/>
        <dbReference type="ChEBI" id="CHEBI:59789"/>
        <dbReference type="ChEBI" id="CHEBI:74411"/>
        <dbReference type="ChEBI" id="CHEBI:74493"/>
        <dbReference type="EC" id="2.1.1.182"/>
    </reaction>
</comment>
<comment type="subcellular location">
    <subcellularLocation>
        <location evidence="1">Cytoplasm</location>
    </subcellularLocation>
</comment>
<comment type="similarity">
    <text evidence="1">Belongs to the class I-like SAM-binding methyltransferase superfamily. rRNA adenine N(6)-methyltransferase family. RsmA subfamily.</text>
</comment>
<sequence>MRIADYSVTKAVLERHGFTFKKSFGQNFLTDTNILQKIVDTAEIDDQVNVIEIGPGIGALTEFLAERAAQVMAFEIDHRLVPILADTLRDFDNVTVVNEDILKVDLAQHIQNFKNPNLPIKVVANLPYYITTPILMHLIESGIPFCEFVVMMQKEVADRISAQPNTKAYGSLSIAVQYYMTAKVAFIVPRTVFVPAPNVDSAILKMVRRPEPAVAVEDENFFFKVSKASFTHRRKTLWNNLTGYFGKTEEVKDKLTKALDQAGLSPSVRGEALSLAEFAGLADALKGQGL</sequence>
<organism>
    <name type="scientific">Streptococcus pneumoniae (strain 70585)</name>
    <dbReference type="NCBI Taxonomy" id="488221"/>
    <lineage>
        <taxon>Bacteria</taxon>
        <taxon>Bacillati</taxon>
        <taxon>Bacillota</taxon>
        <taxon>Bacilli</taxon>
        <taxon>Lactobacillales</taxon>
        <taxon>Streptococcaceae</taxon>
        <taxon>Streptococcus</taxon>
    </lineage>
</organism>
<proteinExistence type="inferred from homology"/>
<protein>
    <recommendedName>
        <fullName evidence="1">Ribosomal RNA small subunit methyltransferase A</fullName>
        <ecNumber evidence="1">2.1.1.182</ecNumber>
    </recommendedName>
    <alternativeName>
        <fullName evidence="1">16S rRNA (adenine(1518)-N(6)/adenine(1519)-N(6))-dimethyltransferase</fullName>
    </alternativeName>
    <alternativeName>
        <fullName evidence="1">16S rRNA dimethyladenosine transferase</fullName>
    </alternativeName>
    <alternativeName>
        <fullName evidence="1">16S rRNA dimethylase</fullName>
    </alternativeName>
    <alternativeName>
        <fullName evidence="1">S-adenosylmethionine-6-N', N'-adenosyl(rRNA) dimethyltransferase</fullName>
    </alternativeName>
</protein>
<gene>
    <name evidence="1" type="primary">rsmA</name>
    <name evidence="1" type="synonym">ksgA</name>
    <name type="ordered locus">SP70585_2056</name>
</gene>
<dbReference type="EC" id="2.1.1.182" evidence="1"/>
<dbReference type="EMBL" id="CP000918">
    <property type="protein sequence ID" value="ACO16459.1"/>
    <property type="molecule type" value="Genomic_DNA"/>
</dbReference>
<dbReference type="RefSeq" id="WP_001216863.1">
    <property type="nucleotide sequence ID" value="NC_012468.1"/>
</dbReference>
<dbReference type="SMR" id="C1CA29"/>
<dbReference type="KEGG" id="snm:SP70585_2056"/>
<dbReference type="HOGENOM" id="CLU_041220_0_0_9"/>
<dbReference type="Proteomes" id="UP000002211">
    <property type="component" value="Chromosome"/>
</dbReference>
<dbReference type="GO" id="GO:0005829">
    <property type="term" value="C:cytosol"/>
    <property type="evidence" value="ECO:0007669"/>
    <property type="project" value="TreeGrafter"/>
</dbReference>
<dbReference type="GO" id="GO:0052908">
    <property type="term" value="F:16S rRNA (adenine(1518)-N(6)/adenine(1519)-N(6))-dimethyltransferase activity"/>
    <property type="evidence" value="ECO:0007669"/>
    <property type="project" value="UniProtKB-EC"/>
</dbReference>
<dbReference type="GO" id="GO:0003723">
    <property type="term" value="F:RNA binding"/>
    <property type="evidence" value="ECO:0007669"/>
    <property type="project" value="UniProtKB-KW"/>
</dbReference>
<dbReference type="CDD" id="cd02440">
    <property type="entry name" value="AdoMet_MTases"/>
    <property type="match status" value="1"/>
</dbReference>
<dbReference type="FunFam" id="1.10.8.100:FF:000005">
    <property type="entry name" value="Ribosomal RNA small subunit methyltransferase A"/>
    <property type="match status" value="1"/>
</dbReference>
<dbReference type="FunFam" id="3.40.50.150:FF:000023">
    <property type="entry name" value="Ribosomal RNA small subunit methyltransferase A"/>
    <property type="match status" value="1"/>
</dbReference>
<dbReference type="Gene3D" id="1.10.8.100">
    <property type="entry name" value="Ribosomal RNA adenine dimethylase-like, domain 2"/>
    <property type="match status" value="1"/>
</dbReference>
<dbReference type="Gene3D" id="3.40.50.150">
    <property type="entry name" value="Vaccinia Virus protein VP39"/>
    <property type="match status" value="1"/>
</dbReference>
<dbReference type="HAMAP" id="MF_00607">
    <property type="entry name" value="16SrRNA_methyltr_A"/>
    <property type="match status" value="1"/>
</dbReference>
<dbReference type="InterPro" id="IPR001737">
    <property type="entry name" value="KsgA/Erm"/>
</dbReference>
<dbReference type="InterPro" id="IPR023165">
    <property type="entry name" value="rRNA_Ade_diMease-like_C"/>
</dbReference>
<dbReference type="InterPro" id="IPR020596">
    <property type="entry name" value="rRNA_Ade_Mease_Trfase_CS"/>
</dbReference>
<dbReference type="InterPro" id="IPR020598">
    <property type="entry name" value="rRNA_Ade_methylase_Trfase_N"/>
</dbReference>
<dbReference type="InterPro" id="IPR011530">
    <property type="entry name" value="rRNA_adenine_dimethylase"/>
</dbReference>
<dbReference type="InterPro" id="IPR029063">
    <property type="entry name" value="SAM-dependent_MTases_sf"/>
</dbReference>
<dbReference type="NCBIfam" id="TIGR00755">
    <property type="entry name" value="ksgA"/>
    <property type="match status" value="1"/>
</dbReference>
<dbReference type="PANTHER" id="PTHR11727">
    <property type="entry name" value="DIMETHYLADENOSINE TRANSFERASE"/>
    <property type="match status" value="1"/>
</dbReference>
<dbReference type="PANTHER" id="PTHR11727:SF7">
    <property type="entry name" value="DIMETHYLADENOSINE TRANSFERASE-RELATED"/>
    <property type="match status" value="1"/>
</dbReference>
<dbReference type="Pfam" id="PF00398">
    <property type="entry name" value="RrnaAD"/>
    <property type="match status" value="1"/>
</dbReference>
<dbReference type="SMART" id="SM00650">
    <property type="entry name" value="rADc"/>
    <property type="match status" value="1"/>
</dbReference>
<dbReference type="SUPFAM" id="SSF53335">
    <property type="entry name" value="S-adenosyl-L-methionine-dependent methyltransferases"/>
    <property type="match status" value="1"/>
</dbReference>
<dbReference type="PROSITE" id="PS01131">
    <property type="entry name" value="RRNA_A_DIMETH"/>
    <property type="match status" value="1"/>
</dbReference>
<dbReference type="PROSITE" id="PS51689">
    <property type="entry name" value="SAM_RNA_A_N6_MT"/>
    <property type="match status" value="1"/>
</dbReference>
<reference key="1">
    <citation type="journal article" date="2010" name="Genome Biol.">
        <title>Structure and dynamics of the pan-genome of Streptococcus pneumoniae and closely related species.</title>
        <authorList>
            <person name="Donati C."/>
            <person name="Hiller N.L."/>
            <person name="Tettelin H."/>
            <person name="Muzzi A."/>
            <person name="Croucher N.J."/>
            <person name="Angiuoli S.V."/>
            <person name="Oggioni M."/>
            <person name="Dunning Hotopp J.C."/>
            <person name="Hu F.Z."/>
            <person name="Riley D.R."/>
            <person name="Covacci A."/>
            <person name="Mitchell T.J."/>
            <person name="Bentley S.D."/>
            <person name="Kilian M."/>
            <person name="Ehrlich G.D."/>
            <person name="Rappuoli R."/>
            <person name="Moxon E.R."/>
            <person name="Masignani V."/>
        </authorList>
    </citation>
    <scope>NUCLEOTIDE SEQUENCE [LARGE SCALE GENOMIC DNA]</scope>
    <source>
        <strain>70585</strain>
    </source>
</reference>
<accession>C1CA29</accession>
<name>RSMA_STRP7</name>
<feature type="chain" id="PRO_1000194401" description="Ribosomal RNA small subunit methyltransferase A">
    <location>
        <begin position="1"/>
        <end position="290"/>
    </location>
</feature>
<feature type="binding site" evidence="1">
    <location>
        <position position="27"/>
    </location>
    <ligand>
        <name>S-adenosyl-L-methionine</name>
        <dbReference type="ChEBI" id="CHEBI:59789"/>
    </ligand>
</feature>
<feature type="binding site" evidence="1">
    <location>
        <position position="29"/>
    </location>
    <ligand>
        <name>S-adenosyl-L-methionine</name>
        <dbReference type="ChEBI" id="CHEBI:59789"/>
    </ligand>
</feature>
<feature type="binding site" evidence="1">
    <location>
        <position position="54"/>
    </location>
    <ligand>
        <name>S-adenosyl-L-methionine</name>
        <dbReference type="ChEBI" id="CHEBI:59789"/>
    </ligand>
</feature>
<feature type="binding site" evidence="1">
    <location>
        <position position="75"/>
    </location>
    <ligand>
        <name>S-adenosyl-L-methionine</name>
        <dbReference type="ChEBI" id="CHEBI:59789"/>
    </ligand>
</feature>
<feature type="binding site" evidence="1">
    <location>
        <position position="100"/>
    </location>
    <ligand>
        <name>S-adenosyl-L-methionine</name>
        <dbReference type="ChEBI" id="CHEBI:59789"/>
    </ligand>
</feature>
<feature type="binding site" evidence="1">
    <location>
        <position position="125"/>
    </location>
    <ligand>
        <name>S-adenosyl-L-methionine</name>
        <dbReference type="ChEBI" id="CHEBI:59789"/>
    </ligand>
</feature>
<keyword id="KW-0963">Cytoplasm</keyword>
<keyword id="KW-0489">Methyltransferase</keyword>
<keyword id="KW-0694">RNA-binding</keyword>
<keyword id="KW-0698">rRNA processing</keyword>
<keyword id="KW-0949">S-adenosyl-L-methionine</keyword>
<keyword id="KW-0808">Transferase</keyword>
<evidence type="ECO:0000255" key="1">
    <source>
        <dbReference type="HAMAP-Rule" id="MF_00607"/>
    </source>
</evidence>